<proteinExistence type="evidence at protein level"/>
<reference key="1">
    <citation type="journal article" date="2001" name="Genomics">
        <title>Transduction of the human gene FAM8A1 by endogenous retrovirus during primate evolution.</title>
        <authorList>
            <person name="Jamain S."/>
            <person name="Girondot M."/>
            <person name="Leroy P."/>
            <person name="Clergue M."/>
            <person name="Quach H."/>
            <person name="Fellous M."/>
            <person name="Bourgeron T."/>
        </authorList>
    </citation>
    <scope>NUCLEOTIDE SEQUENCE [MRNA]</scope>
    <scope>TISSUE SPECIFICITY</scope>
</reference>
<reference key="2">
    <citation type="journal article" date="2004" name="Nat. Genet.">
        <title>Complete sequencing and characterization of 21,243 full-length human cDNAs.</title>
        <authorList>
            <person name="Ota T."/>
            <person name="Suzuki Y."/>
            <person name="Nishikawa T."/>
            <person name="Otsuki T."/>
            <person name="Sugiyama T."/>
            <person name="Irie R."/>
            <person name="Wakamatsu A."/>
            <person name="Hayashi K."/>
            <person name="Sato H."/>
            <person name="Nagai K."/>
            <person name="Kimura K."/>
            <person name="Makita H."/>
            <person name="Sekine M."/>
            <person name="Obayashi M."/>
            <person name="Nishi T."/>
            <person name="Shibahara T."/>
            <person name="Tanaka T."/>
            <person name="Ishii S."/>
            <person name="Yamamoto J."/>
            <person name="Saito K."/>
            <person name="Kawai Y."/>
            <person name="Isono Y."/>
            <person name="Nakamura Y."/>
            <person name="Nagahari K."/>
            <person name="Murakami K."/>
            <person name="Yasuda T."/>
            <person name="Iwayanagi T."/>
            <person name="Wagatsuma M."/>
            <person name="Shiratori A."/>
            <person name="Sudo H."/>
            <person name="Hosoiri T."/>
            <person name="Kaku Y."/>
            <person name="Kodaira H."/>
            <person name="Kondo H."/>
            <person name="Sugawara M."/>
            <person name="Takahashi M."/>
            <person name="Kanda K."/>
            <person name="Yokoi T."/>
            <person name="Furuya T."/>
            <person name="Kikkawa E."/>
            <person name="Omura Y."/>
            <person name="Abe K."/>
            <person name="Kamihara K."/>
            <person name="Katsuta N."/>
            <person name="Sato K."/>
            <person name="Tanikawa M."/>
            <person name="Yamazaki M."/>
            <person name="Ninomiya K."/>
            <person name="Ishibashi T."/>
            <person name="Yamashita H."/>
            <person name="Murakawa K."/>
            <person name="Fujimori K."/>
            <person name="Tanai H."/>
            <person name="Kimata M."/>
            <person name="Watanabe M."/>
            <person name="Hiraoka S."/>
            <person name="Chiba Y."/>
            <person name="Ishida S."/>
            <person name="Ono Y."/>
            <person name="Takiguchi S."/>
            <person name="Watanabe S."/>
            <person name="Yosida M."/>
            <person name="Hotuta T."/>
            <person name="Kusano J."/>
            <person name="Kanehori K."/>
            <person name="Takahashi-Fujii A."/>
            <person name="Hara H."/>
            <person name="Tanase T.-O."/>
            <person name="Nomura Y."/>
            <person name="Togiya S."/>
            <person name="Komai F."/>
            <person name="Hara R."/>
            <person name="Takeuchi K."/>
            <person name="Arita M."/>
            <person name="Imose N."/>
            <person name="Musashino K."/>
            <person name="Yuuki H."/>
            <person name="Oshima A."/>
            <person name="Sasaki N."/>
            <person name="Aotsuka S."/>
            <person name="Yoshikawa Y."/>
            <person name="Matsunawa H."/>
            <person name="Ichihara T."/>
            <person name="Shiohata N."/>
            <person name="Sano S."/>
            <person name="Moriya S."/>
            <person name="Momiyama H."/>
            <person name="Satoh N."/>
            <person name="Takami S."/>
            <person name="Terashima Y."/>
            <person name="Suzuki O."/>
            <person name="Nakagawa S."/>
            <person name="Senoh A."/>
            <person name="Mizoguchi H."/>
            <person name="Goto Y."/>
            <person name="Shimizu F."/>
            <person name="Wakebe H."/>
            <person name="Hishigaki H."/>
            <person name="Watanabe T."/>
            <person name="Sugiyama A."/>
            <person name="Takemoto M."/>
            <person name="Kawakami B."/>
            <person name="Yamazaki M."/>
            <person name="Watanabe K."/>
            <person name="Kumagai A."/>
            <person name="Itakura S."/>
            <person name="Fukuzumi Y."/>
            <person name="Fujimori Y."/>
            <person name="Komiyama M."/>
            <person name="Tashiro H."/>
            <person name="Tanigami A."/>
            <person name="Fujiwara T."/>
            <person name="Ono T."/>
            <person name="Yamada K."/>
            <person name="Fujii Y."/>
            <person name="Ozaki K."/>
            <person name="Hirao M."/>
            <person name="Ohmori Y."/>
            <person name="Kawabata A."/>
            <person name="Hikiji T."/>
            <person name="Kobatake N."/>
            <person name="Inagaki H."/>
            <person name="Ikema Y."/>
            <person name="Okamoto S."/>
            <person name="Okitani R."/>
            <person name="Kawakami T."/>
            <person name="Noguchi S."/>
            <person name="Itoh T."/>
            <person name="Shigeta K."/>
            <person name="Senba T."/>
            <person name="Matsumura K."/>
            <person name="Nakajima Y."/>
            <person name="Mizuno T."/>
            <person name="Morinaga M."/>
            <person name="Sasaki M."/>
            <person name="Togashi T."/>
            <person name="Oyama M."/>
            <person name="Hata H."/>
            <person name="Watanabe M."/>
            <person name="Komatsu T."/>
            <person name="Mizushima-Sugano J."/>
            <person name="Satoh T."/>
            <person name="Shirai Y."/>
            <person name="Takahashi Y."/>
            <person name="Nakagawa K."/>
            <person name="Okumura K."/>
            <person name="Nagase T."/>
            <person name="Nomura N."/>
            <person name="Kikuchi H."/>
            <person name="Masuho Y."/>
            <person name="Yamashita R."/>
            <person name="Nakai K."/>
            <person name="Yada T."/>
            <person name="Nakamura Y."/>
            <person name="Ohara O."/>
            <person name="Isogai T."/>
            <person name="Sugano S."/>
        </authorList>
    </citation>
    <scope>NUCLEOTIDE SEQUENCE [LARGE SCALE MRNA]</scope>
    <source>
        <tissue>Testis</tissue>
    </source>
</reference>
<reference key="3">
    <citation type="journal article" date="2003" name="Nature">
        <title>The DNA sequence and analysis of human chromosome 6.</title>
        <authorList>
            <person name="Mungall A.J."/>
            <person name="Palmer S.A."/>
            <person name="Sims S.K."/>
            <person name="Edwards C.A."/>
            <person name="Ashurst J.L."/>
            <person name="Wilming L."/>
            <person name="Jones M.C."/>
            <person name="Horton R."/>
            <person name="Hunt S.E."/>
            <person name="Scott C.E."/>
            <person name="Gilbert J.G.R."/>
            <person name="Clamp M.E."/>
            <person name="Bethel G."/>
            <person name="Milne S."/>
            <person name="Ainscough R."/>
            <person name="Almeida J.P."/>
            <person name="Ambrose K.D."/>
            <person name="Andrews T.D."/>
            <person name="Ashwell R.I.S."/>
            <person name="Babbage A.K."/>
            <person name="Bagguley C.L."/>
            <person name="Bailey J."/>
            <person name="Banerjee R."/>
            <person name="Barker D.J."/>
            <person name="Barlow K.F."/>
            <person name="Bates K."/>
            <person name="Beare D.M."/>
            <person name="Beasley H."/>
            <person name="Beasley O."/>
            <person name="Bird C.P."/>
            <person name="Blakey S.E."/>
            <person name="Bray-Allen S."/>
            <person name="Brook J."/>
            <person name="Brown A.J."/>
            <person name="Brown J.Y."/>
            <person name="Burford D.C."/>
            <person name="Burrill W."/>
            <person name="Burton J."/>
            <person name="Carder C."/>
            <person name="Carter N.P."/>
            <person name="Chapman J.C."/>
            <person name="Clark S.Y."/>
            <person name="Clark G."/>
            <person name="Clee C.M."/>
            <person name="Clegg S."/>
            <person name="Cobley V."/>
            <person name="Collier R.E."/>
            <person name="Collins J.E."/>
            <person name="Colman L.K."/>
            <person name="Corby N.R."/>
            <person name="Coville G.J."/>
            <person name="Culley K.M."/>
            <person name="Dhami P."/>
            <person name="Davies J."/>
            <person name="Dunn M."/>
            <person name="Earthrowl M.E."/>
            <person name="Ellington A.E."/>
            <person name="Evans K.A."/>
            <person name="Faulkner L."/>
            <person name="Francis M.D."/>
            <person name="Frankish A."/>
            <person name="Frankland J."/>
            <person name="French L."/>
            <person name="Garner P."/>
            <person name="Garnett J."/>
            <person name="Ghori M.J."/>
            <person name="Gilby L.M."/>
            <person name="Gillson C.J."/>
            <person name="Glithero R.J."/>
            <person name="Grafham D.V."/>
            <person name="Grant M."/>
            <person name="Gribble S."/>
            <person name="Griffiths C."/>
            <person name="Griffiths M.N.D."/>
            <person name="Hall R."/>
            <person name="Halls K.S."/>
            <person name="Hammond S."/>
            <person name="Harley J.L."/>
            <person name="Hart E.A."/>
            <person name="Heath P.D."/>
            <person name="Heathcott R."/>
            <person name="Holmes S.J."/>
            <person name="Howden P.J."/>
            <person name="Howe K.L."/>
            <person name="Howell G.R."/>
            <person name="Huckle E."/>
            <person name="Humphray S.J."/>
            <person name="Humphries M.D."/>
            <person name="Hunt A.R."/>
            <person name="Johnson C.M."/>
            <person name="Joy A.A."/>
            <person name="Kay M."/>
            <person name="Keenan S.J."/>
            <person name="Kimberley A.M."/>
            <person name="King A."/>
            <person name="Laird G.K."/>
            <person name="Langford C."/>
            <person name="Lawlor S."/>
            <person name="Leongamornlert D.A."/>
            <person name="Leversha M."/>
            <person name="Lloyd C.R."/>
            <person name="Lloyd D.M."/>
            <person name="Loveland J.E."/>
            <person name="Lovell J."/>
            <person name="Martin S."/>
            <person name="Mashreghi-Mohammadi M."/>
            <person name="Maslen G.L."/>
            <person name="Matthews L."/>
            <person name="McCann O.T."/>
            <person name="McLaren S.J."/>
            <person name="McLay K."/>
            <person name="McMurray A."/>
            <person name="Moore M.J.F."/>
            <person name="Mullikin J.C."/>
            <person name="Niblett D."/>
            <person name="Nickerson T."/>
            <person name="Novik K.L."/>
            <person name="Oliver K."/>
            <person name="Overton-Larty E.K."/>
            <person name="Parker A."/>
            <person name="Patel R."/>
            <person name="Pearce A.V."/>
            <person name="Peck A.I."/>
            <person name="Phillimore B.J.C.T."/>
            <person name="Phillips S."/>
            <person name="Plumb R.W."/>
            <person name="Porter K.M."/>
            <person name="Ramsey Y."/>
            <person name="Ranby S.A."/>
            <person name="Rice C.M."/>
            <person name="Ross M.T."/>
            <person name="Searle S.M."/>
            <person name="Sehra H.K."/>
            <person name="Sheridan E."/>
            <person name="Skuce C.D."/>
            <person name="Smith S."/>
            <person name="Smith M."/>
            <person name="Spraggon L."/>
            <person name="Squares S.L."/>
            <person name="Steward C.A."/>
            <person name="Sycamore N."/>
            <person name="Tamlyn-Hall G."/>
            <person name="Tester J."/>
            <person name="Theaker A.J."/>
            <person name="Thomas D.W."/>
            <person name="Thorpe A."/>
            <person name="Tracey A."/>
            <person name="Tromans A."/>
            <person name="Tubby B."/>
            <person name="Wall M."/>
            <person name="Wallis J.M."/>
            <person name="West A.P."/>
            <person name="White S.S."/>
            <person name="Whitehead S.L."/>
            <person name="Whittaker H."/>
            <person name="Wild A."/>
            <person name="Willey D.J."/>
            <person name="Wilmer T.E."/>
            <person name="Wood J.M."/>
            <person name="Wray P.W."/>
            <person name="Wyatt J.C."/>
            <person name="Young L."/>
            <person name="Younger R.M."/>
            <person name="Bentley D.R."/>
            <person name="Coulson A."/>
            <person name="Durbin R.M."/>
            <person name="Hubbard T."/>
            <person name="Sulston J.E."/>
            <person name="Dunham I."/>
            <person name="Rogers J."/>
            <person name="Beck S."/>
        </authorList>
    </citation>
    <scope>NUCLEOTIDE SEQUENCE [LARGE SCALE GENOMIC DNA]</scope>
</reference>
<reference key="4">
    <citation type="submission" date="2005-07" db="EMBL/GenBank/DDBJ databases">
        <authorList>
            <person name="Mural R.J."/>
            <person name="Istrail S."/>
            <person name="Sutton G.G."/>
            <person name="Florea L."/>
            <person name="Halpern A.L."/>
            <person name="Mobarry C.M."/>
            <person name="Lippert R."/>
            <person name="Walenz B."/>
            <person name="Shatkay H."/>
            <person name="Dew I."/>
            <person name="Miller J.R."/>
            <person name="Flanigan M.J."/>
            <person name="Edwards N.J."/>
            <person name="Bolanos R."/>
            <person name="Fasulo D."/>
            <person name="Halldorsson B.V."/>
            <person name="Hannenhalli S."/>
            <person name="Turner R."/>
            <person name="Yooseph S."/>
            <person name="Lu F."/>
            <person name="Nusskern D.R."/>
            <person name="Shue B.C."/>
            <person name="Zheng X.H."/>
            <person name="Zhong F."/>
            <person name="Delcher A.L."/>
            <person name="Huson D.H."/>
            <person name="Kravitz S.A."/>
            <person name="Mouchard L."/>
            <person name="Reinert K."/>
            <person name="Remington K.A."/>
            <person name="Clark A.G."/>
            <person name="Waterman M.S."/>
            <person name="Eichler E.E."/>
            <person name="Adams M.D."/>
            <person name="Hunkapiller M.W."/>
            <person name="Myers E.W."/>
            <person name="Venter J.C."/>
        </authorList>
    </citation>
    <scope>NUCLEOTIDE SEQUENCE [LARGE SCALE GENOMIC DNA]</scope>
</reference>
<reference key="5">
    <citation type="journal article" date="2004" name="Genome Res.">
        <title>The status, quality, and expansion of the NIH full-length cDNA project: the Mammalian Gene Collection (MGC).</title>
        <authorList>
            <consortium name="The MGC Project Team"/>
        </authorList>
    </citation>
    <scope>NUCLEOTIDE SEQUENCE [LARGE SCALE MRNA]</scope>
    <source>
        <tissue>Brain</tissue>
    </source>
</reference>
<reference key="6">
    <citation type="journal article" date="2004" name="Anal. Chem.">
        <title>Robust phosphoproteomic profiling of tyrosine phosphorylation sites from human T cells using immobilized metal affinity chromatography and tandem mass spectrometry.</title>
        <authorList>
            <person name="Brill L.M."/>
            <person name="Salomon A.R."/>
            <person name="Ficarro S.B."/>
            <person name="Mukherji M."/>
            <person name="Stettler-Gill M."/>
            <person name="Peters E.C."/>
        </authorList>
    </citation>
    <scope>IDENTIFICATION BY MASS SPECTROMETRY [LARGE SCALE ANALYSIS]</scope>
    <source>
        <tissue>Leukemic T-cell</tissue>
    </source>
</reference>
<reference key="7">
    <citation type="journal article" date="2008" name="Mol. Cell">
        <title>Kinase-selective enrichment enables quantitative phosphoproteomics of the kinome across the cell cycle.</title>
        <authorList>
            <person name="Daub H."/>
            <person name="Olsen J.V."/>
            <person name="Bairlein M."/>
            <person name="Gnad F."/>
            <person name="Oppermann F.S."/>
            <person name="Korner R."/>
            <person name="Greff Z."/>
            <person name="Keri G."/>
            <person name="Stemmann O."/>
            <person name="Mann M."/>
        </authorList>
    </citation>
    <scope>IDENTIFICATION BY MASS SPECTROMETRY [LARGE SCALE ANALYSIS]</scope>
    <source>
        <tissue>Cervix carcinoma</tissue>
    </source>
</reference>
<reference key="8">
    <citation type="journal article" date="2008" name="Proc. Natl. Acad. Sci. U.S.A.">
        <title>A quantitative atlas of mitotic phosphorylation.</title>
        <authorList>
            <person name="Dephoure N."/>
            <person name="Zhou C."/>
            <person name="Villen J."/>
            <person name="Beausoleil S.A."/>
            <person name="Bakalarski C.E."/>
            <person name="Elledge S.J."/>
            <person name="Gygi S.P."/>
        </authorList>
    </citation>
    <scope>PHOSPHORYLATION [LARGE SCALE ANALYSIS] AT SER-229</scope>
    <scope>IDENTIFICATION BY MASS SPECTROMETRY [LARGE SCALE ANALYSIS]</scope>
    <source>
        <tissue>Cervix carcinoma</tissue>
    </source>
</reference>
<reference key="9">
    <citation type="journal article" date="2013" name="J. Proteome Res.">
        <title>Toward a comprehensive characterization of a human cancer cell phosphoproteome.</title>
        <authorList>
            <person name="Zhou H."/>
            <person name="Di Palma S."/>
            <person name="Preisinger C."/>
            <person name="Peng M."/>
            <person name="Polat A.N."/>
            <person name="Heck A.J."/>
            <person name="Mohammed S."/>
        </authorList>
    </citation>
    <scope>PHOSPHORYLATION [LARGE SCALE ANALYSIS] AT SER-229</scope>
    <scope>IDENTIFICATION BY MASS SPECTROMETRY [LARGE SCALE ANALYSIS]</scope>
    <source>
        <tissue>Cervix carcinoma</tissue>
        <tissue>Erythroleukemia</tissue>
    </source>
</reference>
<reference key="10">
    <citation type="journal article" date="2014" name="J. Proteomics">
        <title>An enzyme assisted RP-RPLC approach for in-depth analysis of human liver phosphoproteome.</title>
        <authorList>
            <person name="Bian Y."/>
            <person name="Song C."/>
            <person name="Cheng K."/>
            <person name="Dong M."/>
            <person name="Wang F."/>
            <person name="Huang J."/>
            <person name="Sun D."/>
            <person name="Wang L."/>
            <person name="Ye M."/>
            <person name="Zou H."/>
        </authorList>
    </citation>
    <scope>IDENTIFICATION BY MASS SPECTROMETRY [LARGE SCALE ANALYSIS]</scope>
    <source>
        <tissue>Liver</tissue>
    </source>
</reference>
<reference key="11">
    <citation type="journal article" date="2017" name="J. Cell Sci.">
        <title>Conserved cytoplasmic domains promote Hrd1 ubiquitin ligase complex formation for ER-associated degradation (ERAD).</title>
        <authorList>
            <person name="Schulz J."/>
            <person name="Avci D."/>
            <person name="Queisser M.A."/>
            <person name="Gutschmidt A."/>
            <person name="Dreher L.S."/>
            <person name="Fenech E.J."/>
            <person name="Volkmar N."/>
            <person name="Hayashi Y."/>
            <person name="Hoppe T."/>
            <person name="Christianson J.C."/>
        </authorList>
    </citation>
    <scope>FUNCTION</scope>
    <scope>IDENTIFICATION IN THE HRD1 COMPLEX</scope>
    <scope>MUTAGENESIS OF 120-TRP--TRP-122 AND TRP-131</scope>
</reference>
<dbReference type="EMBL" id="AF097027">
    <property type="protein sequence ID" value="AAF07850.1"/>
    <property type="molecule type" value="mRNA"/>
</dbReference>
<dbReference type="EMBL" id="AK312814">
    <property type="protein sequence ID" value="BAG35672.1"/>
    <property type="molecule type" value="mRNA"/>
</dbReference>
<dbReference type="EMBL" id="AL138824">
    <property type="status" value="NOT_ANNOTATED_CDS"/>
    <property type="molecule type" value="Genomic_DNA"/>
</dbReference>
<dbReference type="EMBL" id="AF097026">
    <property type="protein sequence ID" value="AAF07849.1"/>
    <property type="molecule type" value="Genomic_DNA"/>
</dbReference>
<dbReference type="EMBL" id="CH471087">
    <property type="protein sequence ID" value="EAW55382.1"/>
    <property type="molecule type" value="Genomic_DNA"/>
</dbReference>
<dbReference type="EMBL" id="BC047881">
    <property type="protein sequence ID" value="AAH47881.1"/>
    <property type="molecule type" value="mRNA"/>
</dbReference>
<dbReference type="CCDS" id="CCDS4540.1"/>
<dbReference type="RefSeq" id="NP_057339.1">
    <property type="nucleotide sequence ID" value="NM_016255.3"/>
</dbReference>
<dbReference type="BioGRID" id="119541">
    <property type="interactions" value="99"/>
</dbReference>
<dbReference type="CORUM" id="Q9UBU6"/>
<dbReference type="FunCoup" id="Q9UBU6">
    <property type="interactions" value="636"/>
</dbReference>
<dbReference type="IntAct" id="Q9UBU6">
    <property type="interactions" value="75"/>
</dbReference>
<dbReference type="MINT" id="Q9UBU6"/>
<dbReference type="STRING" id="9606.ENSP00000259963"/>
<dbReference type="TCDB" id="2.A.133.1.4">
    <property type="family name" value="the rdd na+(li+)(k+)/h+ antiporter (rdd) family"/>
</dbReference>
<dbReference type="GlyGen" id="Q9UBU6">
    <property type="glycosylation" value="2 sites, 1 O-linked glycan (1 site)"/>
</dbReference>
<dbReference type="iPTMnet" id="Q9UBU6"/>
<dbReference type="PhosphoSitePlus" id="Q9UBU6"/>
<dbReference type="SwissPalm" id="Q9UBU6"/>
<dbReference type="BioMuta" id="FAM8A1"/>
<dbReference type="DMDM" id="74753230"/>
<dbReference type="jPOST" id="Q9UBU6"/>
<dbReference type="MassIVE" id="Q9UBU6"/>
<dbReference type="PaxDb" id="9606-ENSP00000259963"/>
<dbReference type="PeptideAtlas" id="Q9UBU6"/>
<dbReference type="ProteomicsDB" id="84070"/>
<dbReference type="Pumba" id="Q9UBU6"/>
<dbReference type="Antibodypedia" id="68212">
    <property type="antibodies" value="100 antibodies from 15 providers"/>
</dbReference>
<dbReference type="DNASU" id="51439"/>
<dbReference type="Ensembl" id="ENST00000259963.4">
    <property type="protein sequence ID" value="ENSP00000259963.3"/>
    <property type="gene ID" value="ENSG00000137414.7"/>
</dbReference>
<dbReference type="GeneID" id="51439"/>
<dbReference type="KEGG" id="hsa:51439"/>
<dbReference type="MANE-Select" id="ENST00000259963.4">
    <property type="protein sequence ID" value="ENSP00000259963.3"/>
    <property type="RefSeq nucleotide sequence ID" value="NM_016255.3"/>
    <property type="RefSeq protein sequence ID" value="NP_057339.1"/>
</dbReference>
<dbReference type="UCSC" id="uc003ncc.4">
    <property type="organism name" value="human"/>
</dbReference>
<dbReference type="AGR" id="HGNC:16372"/>
<dbReference type="CTD" id="51439"/>
<dbReference type="DisGeNET" id="51439"/>
<dbReference type="GeneCards" id="FAM8A1"/>
<dbReference type="HGNC" id="HGNC:16372">
    <property type="gene designation" value="FAM8A1"/>
</dbReference>
<dbReference type="HPA" id="ENSG00000137414">
    <property type="expression patterns" value="Low tissue specificity"/>
</dbReference>
<dbReference type="MIM" id="618409">
    <property type="type" value="gene"/>
</dbReference>
<dbReference type="neXtProt" id="NX_Q9UBU6"/>
<dbReference type="OpenTargets" id="ENSG00000137414"/>
<dbReference type="PharmGKB" id="PA27986"/>
<dbReference type="VEuPathDB" id="HostDB:ENSG00000137414"/>
<dbReference type="eggNOG" id="KOG4647">
    <property type="taxonomic scope" value="Eukaryota"/>
</dbReference>
<dbReference type="GeneTree" id="ENSGT00390000007346"/>
<dbReference type="HOGENOM" id="CLU_053631_1_0_1"/>
<dbReference type="InParanoid" id="Q9UBU6"/>
<dbReference type="OMA" id="QEQAGCE"/>
<dbReference type="OrthoDB" id="10061042at2759"/>
<dbReference type="PAN-GO" id="Q9UBU6">
    <property type="GO annotations" value="0 GO annotations based on evolutionary models"/>
</dbReference>
<dbReference type="PhylomeDB" id="Q9UBU6"/>
<dbReference type="TreeFam" id="TF314024"/>
<dbReference type="PathwayCommons" id="Q9UBU6"/>
<dbReference type="SignaLink" id="Q9UBU6"/>
<dbReference type="SIGNOR" id="Q9UBU6"/>
<dbReference type="BioGRID-ORCS" id="51439">
    <property type="hits" value="9 hits in 1156 CRISPR screens"/>
</dbReference>
<dbReference type="GenomeRNAi" id="51439"/>
<dbReference type="Pharos" id="Q9UBU6">
    <property type="development level" value="Tbio"/>
</dbReference>
<dbReference type="PRO" id="PR:Q9UBU6"/>
<dbReference type="Proteomes" id="UP000005640">
    <property type="component" value="Chromosome 6"/>
</dbReference>
<dbReference type="RNAct" id="Q9UBU6">
    <property type="molecule type" value="protein"/>
</dbReference>
<dbReference type="Bgee" id="ENSG00000137414">
    <property type="expression patterns" value="Expressed in Brodmann (1909) area 23 and 211 other cell types or tissues"/>
</dbReference>
<dbReference type="ExpressionAtlas" id="Q9UBU6">
    <property type="expression patterns" value="baseline and differential"/>
</dbReference>
<dbReference type="GO" id="GO:0000836">
    <property type="term" value="C:Hrd1p ubiquitin ligase complex"/>
    <property type="evidence" value="ECO:0000314"/>
    <property type="project" value="FlyBase"/>
</dbReference>
<dbReference type="GO" id="GO:0036503">
    <property type="term" value="P:ERAD pathway"/>
    <property type="evidence" value="ECO:0000305"/>
    <property type="project" value="FlyBase"/>
</dbReference>
<dbReference type="InterPro" id="IPR039871">
    <property type="entry name" value="FAM8A1"/>
</dbReference>
<dbReference type="InterPro" id="IPR010432">
    <property type="entry name" value="RDD"/>
</dbReference>
<dbReference type="PANTHER" id="PTHR13659">
    <property type="entry name" value="AUTOSOMAL HIGHLY CONSERVED PROTEIN"/>
    <property type="match status" value="1"/>
</dbReference>
<dbReference type="PANTHER" id="PTHR13659:SF5">
    <property type="entry name" value="PROTEIN FAM8A1"/>
    <property type="match status" value="1"/>
</dbReference>
<dbReference type="Pfam" id="PF06271">
    <property type="entry name" value="RDD"/>
    <property type="match status" value="1"/>
</dbReference>
<organism>
    <name type="scientific">Homo sapiens</name>
    <name type="common">Human</name>
    <dbReference type="NCBI Taxonomy" id="9606"/>
    <lineage>
        <taxon>Eukaryota</taxon>
        <taxon>Metazoa</taxon>
        <taxon>Chordata</taxon>
        <taxon>Craniata</taxon>
        <taxon>Vertebrata</taxon>
        <taxon>Euteleostomi</taxon>
        <taxon>Mammalia</taxon>
        <taxon>Eutheria</taxon>
        <taxon>Euarchontoglires</taxon>
        <taxon>Primates</taxon>
        <taxon>Haplorrhini</taxon>
        <taxon>Catarrhini</taxon>
        <taxon>Hominidae</taxon>
        <taxon>Homo</taxon>
    </lineage>
</organism>
<keyword id="KW-0472">Membrane</keyword>
<keyword id="KW-0597">Phosphoprotein</keyword>
<keyword id="KW-1267">Proteomics identification</keyword>
<keyword id="KW-1185">Reference proteome</keyword>
<keyword id="KW-0812">Transmembrane</keyword>
<keyword id="KW-1133">Transmembrane helix</keyword>
<protein>
    <recommendedName>
        <fullName>Protein FAM8A1</fullName>
    </recommendedName>
    <alternativeName>
        <fullName>Autosomal highly conserved protein</fullName>
    </alternativeName>
</protein>
<gene>
    <name type="primary">FAM8A1</name>
    <name type="synonym">AHCP</name>
</gene>
<feature type="chain" id="PRO_0000087167" description="Protein FAM8A1">
    <location>
        <begin position="1"/>
        <end position="413"/>
    </location>
</feature>
<feature type="transmembrane region" description="Helical" evidence="1">
    <location>
        <begin position="257"/>
        <end position="277"/>
    </location>
</feature>
<feature type="transmembrane region" description="Helical" evidence="1">
    <location>
        <begin position="304"/>
        <end position="324"/>
    </location>
</feature>
<feature type="transmembrane region" description="Helical" evidence="1">
    <location>
        <begin position="371"/>
        <end position="391"/>
    </location>
</feature>
<feature type="domain" description="RDD">
    <location>
        <begin position="242"/>
        <end position="408"/>
    </location>
</feature>
<feature type="region of interest" description="Disordered" evidence="2">
    <location>
        <begin position="1"/>
        <end position="105"/>
    </location>
</feature>
<feature type="region of interest" description="Necessary and sufficient to interact with SYVN1" evidence="4">
    <location>
        <begin position="107"/>
        <end position="139"/>
    </location>
</feature>
<feature type="region of interest" description="Disordered" evidence="2">
    <location>
        <begin position="217"/>
        <end position="236"/>
    </location>
</feature>
<feature type="compositionally biased region" description="Basic and acidic residues" evidence="2">
    <location>
        <begin position="1"/>
        <end position="10"/>
    </location>
</feature>
<feature type="compositionally biased region" description="Low complexity" evidence="2">
    <location>
        <begin position="49"/>
        <end position="64"/>
    </location>
</feature>
<feature type="compositionally biased region" description="Basic and acidic residues" evidence="2">
    <location>
        <begin position="65"/>
        <end position="78"/>
    </location>
</feature>
<feature type="modified residue" description="Phosphoserine" evidence="6 7">
    <location>
        <position position="229"/>
    </location>
</feature>
<feature type="mutagenesis site" description="Decreased interaction with SYVN1 and HERPUD1." evidence="4">
    <original>WLW</original>
    <variation>ALA</variation>
    <location>
        <begin position="120"/>
        <end position="122"/>
    </location>
</feature>
<feature type="mutagenesis site" description="Decreased interaction with HERPUD1; no effect on interaction with SYVN1." evidence="4">
    <original>W</original>
    <variation>A</variation>
    <location>
        <position position="131"/>
    </location>
</feature>
<accession>Q9UBU6</accession>
<accession>B2R725</accession>
<comment type="function">
    <text evidence="4">Plays a role in the assembly of the HRD1 complex, a complex involved in the ubiquitin-proteasome-dependent process of ER-associated degradation (ERAD).</text>
</comment>
<comment type="subunit">
    <text evidence="4">Component of the HRD1 complex, which comprises at least SYNV1/HRD1, FAM8A1, HERPUD1/HERP, OS9, SEL1L and UBE2J1. This interaction stabilizes FAM8A1 protein, preventing its proteasomal degradation. FAM8A1 binding to SYNV1 may promote recruitment of HERPUD1 to the HRD1 complex.</text>
</comment>
<comment type="interaction">
    <interactant intactId="EBI-6309101">
        <id>Q9UBU6</id>
    </interactant>
    <interactant intactId="EBI-947849">
        <id>Q86TM6</id>
        <label>SYVN1</label>
    </interactant>
    <organismsDiffer>false</organismsDiffer>
    <experiments>22</experiments>
</comment>
<comment type="subcellular location">
    <subcellularLocation>
        <location evidence="5">Membrane</location>
        <topology evidence="5">Multi-pass membrane protein</topology>
    </subcellularLocation>
</comment>
<comment type="tissue specificity">
    <text evidence="3">Ubiquitously expressed, with a higher level of expression in testis.</text>
</comment>
<evidence type="ECO:0000255" key="1"/>
<evidence type="ECO:0000256" key="2">
    <source>
        <dbReference type="SAM" id="MobiDB-lite"/>
    </source>
</evidence>
<evidence type="ECO:0000269" key="3">
    <source>
    </source>
</evidence>
<evidence type="ECO:0000269" key="4">
    <source>
    </source>
</evidence>
<evidence type="ECO:0000305" key="5"/>
<evidence type="ECO:0007744" key="6">
    <source>
    </source>
</evidence>
<evidence type="ECO:0007744" key="7">
    <source>
    </source>
</evidence>
<sequence>MAEGPEEARGHPPGQDDGGGDHEPVPSLRGPPTTAVPCPRDDPQAEPQAPGRPTAPGLAAAAAADKLEPPRELRKRGEAASGSGAELQEQAGCEAPEAAAPRERPARLSAREYSRQVHEWLWQSYCGYLTWHSGLAAFPAYCSPQPSPQSFPSGGAAVPQAAAPPPPQLGYYNPFYFLSPGAAGPDPRTAAGISTPAPVAGLGPRAPHVQASVRATPVTRVGSAAPSRSPSETGRQAGREYVIPSLAHRFMAEMVDFFILFFIKATIVLSIMHLSGIKDISKFAMHYIIEEIDEDTSMEDLQKMMVVALIYRLLVCFYEIICIWGAGGATPGKFLLGLRVVTCDTSVLIAPSRVLVIPSSNVSITTSTIRALIKNFSIASFFPAFITLLFFQHNRTAYDIVAGTIVVKRNGVR</sequence>
<name>FA8A1_HUMAN</name>